<accession>P08884</accession>
<accession>P97389</accession>
<keyword id="KW-0204">Cytolysis</keyword>
<keyword id="KW-0903">Direct protein sequencing</keyword>
<keyword id="KW-1015">Disulfide bond</keyword>
<keyword id="KW-0325">Glycoprotein</keyword>
<keyword id="KW-0378">Hydrolase</keyword>
<keyword id="KW-0458">Lysosome</keyword>
<keyword id="KW-0645">Protease</keyword>
<keyword id="KW-1185">Reference proteome</keyword>
<keyword id="KW-0720">Serine protease</keyword>
<keyword id="KW-0732">Signal</keyword>
<keyword id="KW-0865">Zymogen</keyword>
<protein>
    <recommendedName>
        <fullName>Granzyme E</fullName>
        <ecNumber>3.4.21.-</ecNumber>
    </recommendedName>
    <alternativeName>
        <fullName>CTL serine protease 2</fullName>
    </alternativeName>
    <alternativeName>
        <fullName>Cytotoxic cell protease 3</fullName>
        <shortName>CCP3</shortName>
    </alternativeName>
    <alternativeName>
        <fullName>Cytotoxic serine protease 2</fullName>
    </alternativeName>
    <alternativeName>
        <fullName>D12</fullName>
    </alternativeName>
    <alternativeName>
        <fullName>MCSP2</fullName>
    </alternativeName>
</protein>
<reference key="1">
    <citation type="journal article" date="1988" name="FEBS Lett.">
        <title>Isolation of two cDNA sequences which encode cytotoxic cell proteases.</title>
        <authorList>
            <person name="Bleackley R.C."/>
            <person name="Duggan B."/>
            <person name="Ehrman N."/>
            <person name="Lobe C.G."/>
        </authorList>
    </citation>
    <scope>NUCLEOTIDE SEQUENCE [MRNA]</scope>
</reference>
<reference key="2">
    <citation type="submission" date="1990-11" db="EMBL/GenBank/DDBJ databases">
        <authorList>
            <person name="Prendergast J.A."/>
            <person name="Pinkoski M."/>
            <person name="Wolfenden A."/>
            <person name="Bleackley R.C."/>
        </authorList>
    </citation>
    <scope>NUCLEOTIDE SEQUENCE</scope>
</reference>
<reference key="3">
    <citation type="journal article" date="1996" name="Proc. Natl. Acad. Sci. U.S.A.">
        <title>Long-range disruption of gene expression by a selectable marker cassette.</title>
        <authorList>
            <person name="Pham C.T.N."/>
            <person name="MacIvor D.M."/>
            <person name="Hug B.A."/>
            <person name="Heusel J.W."/>
            <person name="Ley T.J."/>
        </authorList>
    </citation>
    <scope>NUCLEOTIDE SEQUENCE [GENOMIC DNA]</scope>
    <source>
        <strain>129/Sv</strain>
    </source>
</reference>
<reference key="4">
    <citation type="journal article" date="1988" name="Proc. Natl. Acad. Sci. U.S.A.">
        <title>Identification and sequencing of cDNA clones encoding the granule-associated serine proteases granzymes D, E, and F of cytolytic T lymphocytes.</title>
        <authorList>
            <person name="Jenne D.E."/>
            <person name="Rey C."/>
            <person name="Haefliger J.-A."/>
            <person name="Qiao B.-Y."/>
            <person name="Groscurth P."/>
            <person name="Tschopp J."/>
        </authorList>
    </citation>
    <scope>NUCLEOTIDE SEQUENCE [MRNA] OF 8-248</scope>
</reference>
<reference key="5">
    <citation type="journal article" date="1988" name="J. Exp. Med.">
        <title>Isolation and sequence analysis of serine protease cDNAs from mouse cytolytic T lymphocytes.</title>
        <authorList>
            <person name="Kwon B.S."/>
            <person name="Kestler D."/>
            <person name="Lee E."/>
            <person name="Wakulchik M."/>
            <person name="Young J.D.-E."/>
        </authorList>
    </citation>
    <scope>NUCLEOTIDE SEQUENCE [MRNA] OF 14-248</scope>
    <source>
        <tissue>Cytotoxic T-cell</tissue>
    </source>
</reference>
<reference key="6">
    <citation type="journal article" date="1987" name="Cell">
        <title>A family of serine esterases in lytic granules of cytolytic T lymphocytes.</title>
        <authorList>
            <person name="Masson D."/>
            <person name="Tschopp J."/>
        </authorList>
    </citation>
    <scope>PROTEIN SEQUENCE OF 21-40</scope>
</reference>
<comment type="function">
    <text>This enzyme is probably necessary for target cell lysis in cell-mediated immune responses.</text>
</comment>
<comment type="subcellular location">
    <subcellularLocation>
        <location>Cytolytic granule</location>
    </subcellularLocation>
</comment>
<comment type="similarity">
    <text evidence="3">Belongs to the peptidase S1 family. Granzyme subfamily.</text>
</comment>
<feature type="signal peptide">
    <location>
        <begin position="1"/>
        <end position="18"/>
    </location>
</feature>
<feature type="propeptide" id="PRO_0000027407" evidence="4">
    <location>
        <begin position="19"/>
        <end position="20"/>
    </location>
</feature>
<feature type="chain" id="PRO_0000027408" description="Granzyme E">
    <location>
        <begin position="21"/>
        <end position="248"/>
    </location>
</feature>
<feature type="domain" description="Peptidase S1" evidence="3">
    <location>
        <begin position="21"/>
        <end position="246"/>
    </location>
</feature>
<feature type="active site" description="Charge relay system" evidence="1">
    <location>
        <position position="65"/>
    </location>
</feature>
<feature type="active site" description="Charge relay system" evidence="1">
    <location>
        <position position="109"/>
    </location>
</feature>
<feature type="active site" description="Charge relay system" evidence="1">
    <location>
        <position position="204"/>
    </location>
</feature>
<feature type="glycosylation site" description="N-linked (GlcNAc...) asparagine" evidence="2">
    <location>
        <position position="68"/>
    </location>
</feature>
<feature type="glycosylation site" description="N-linked (GlcNAc...) asparagine" evidence="2">
    <location>
        <position position="102"/>
    </location>
</feature>
<feature type="glycosylation site" description="N-linked (GlcNAc...) asparagine" evidence="2">
    <location>
        <position position="154"/>
    </location>
</feature>
<feature type="glycosylation site" description="N-linked (GlcNAc...) asparagine" evidence="2">
    <location>
        <position position="223"/>
    </location>
</feature>
<feature type="disulfide bond" evidence="3">
    <location>
        <begin position="50"/>
        <end position="66"/>
    </location>
</feature>
<feature type="disulfide bond" evidence="3">
    <location>
        <begin position="143"/>
        <end position="210"/>
    </location>
</feature>
<feature type="disulfide bond" evidence="3">
    <location>
        <begin position="175"/>
        <end position="189"/>
    </location>
</feature>
<feature type="sequence conflict" description="In Ref. 3; AAB19192." evidence="5" ref="3">
    <original>L</original>
    <variation>P</variation>
    <location>
        <position position="5"/>
    </location>
</feature>
<feature type="sequence conflict" description="In Ref. 5; AAA37487/CAA32255." evidence="5" ref="5">
    <original>R</original>
    <variation>K</variation>
    <location>
        <position position="132"/>
    </location>
</feature>
<feature type="sequence conflict" description="In Ref. 3 and 4." evidence="5" ref="3 4">
    <original>S</original>
    <variation>P</variation>
    <location>
        <position position="150"/>
    </location>
</feature>
<organism>
    <name type="scientific">Mus musculus</name>
    <name type="common">Mouse</name>
    <dbReference type="NCBI Taxonomy" id="10090"/>
    <lineage>
        <taxon>Eukaryota</taxon>
        <taxon>Metazoa</taxon>
        <taxon>Chordata</taxon>
        <taxon>Craniata</taxon>
        <taxon>Vertebrata</taxon>
        <taxon>Euteleostomi</taxon>
        <taxon>Mammalia</taxon>
        <taxon>Eutheria</taxon>
        <taxon>Euarchontoglires</taxon>
        <taxon>Glires</taxon>
        <taxon>Rodentia</taxon>
        <taxon>Myomorpha</taxon>
        <taxon>Muroidea</taxon>
        <taxon>Muridae</taxon>
        <taxon>Murinae</taxon>
        <taxon>Mus</taxon>
        <taxon>Mus</taxon>
    </lineage>
</organism>
<evidence type="ECO:0000250" key="1"/>
<evidence type="ECO:0000255" key="2"/>
<evidence type="ECO:0000255" key="3">
    <source>
        <dbReference type="PROSITE-ProRule" id="PRU00274"/>
    </source>
</evidence>
<evidence type="ECO:0000269" key="4">
    <source>
    </source>
</evidence>
<evidence type="ECO:0000305" key="5"/>
<name>GRAE_MOUSE</name>
<sequence>MPPVLILLTLLLPLGAGAEEIIGGHVVKPHSRPYMAFVKSVDIEGNRRYCGGFLVQDDFVLTAAHCRNRTMTVTLGAHNIKAKEETQQIIPVAKAIPHPDYNATAFFSDIMLLKLESKAKRTKAVRPLKLPRPNARVKPGDVCSVAGWGSRSINDTKASARLREAQLVIQEDEECKKRFRHYTETTEICAGDLKKIKTPFKGDSGGPLVCDNKAYGLLAYAKNRTISSGVFTKIVHFLPWISRNMKLL</sequence>
<dbReference type="EC" id="3.4.21.-"/>
<dbReference type="EMBL" id="M36901">
    <property type="protein sequence ID" value="AAA37487.1"/>
    <property type="molecule type" value="mRNA"/>
</dbReference>
<dbReference type="EMBL" id="X12821">
    <property type="protein sequence ID" value="CAA31308.1"/>
    <property type="molecule type" value="mRNA"/>
</dbReference>
<dbReference type="EMBL" id="U66474">
    <property type="protein sequence ID" value="AAB19192.1"/>
    <property type="molecule type" value="Genomic_DNA"/>
</dbReference>
<dbReference type="EMBL" id="X56988">
    <property type="protein sequence ID" value="CAA40306.1"/>
    <property type="molecule type" value="Genomic_DNA"/>
</dbReference>
<dbReference type="EMBL" id="J03256">
    <property type="protein sequence ID" value="AAA37737.1"/>
    <property type="molecule type" value="mRNA"/>
</dbReference>
<dbReference type="EMBL" id="X14093">
    <property type="protein sequence ID" value="CAA32255.1"/>
    <property type="molecule type" value="mRNA"/>
</dbReference>
<dbReference type="CCDS" id="CCDS27143.1"/>
<dbReference type="PIR" id="S01006">
    <property type="entry name" value="S01006"/>
</dbReference>
<dbReference type="RefSeq" id="NP_034503.2">
    <property type="nucleotide sequence ID" value="NM_010373.3"/>
</dbReference>
<dbReference type="SMR" id="P08884"/>
<dbReference type="FunCoup" id="P08884">
    <property type="interactions" value="396"/>
</dbReference>
<dbReference type="STRING" id="10090.ENSMUSP00000086978"/>
<dbReference type="MEROPS" id="S01.399"/>
<dbReference type="GlyCosmos" id="P08884">
    <property type="glycosylation" value="4 sites, No reported glycans"/>
</dbReference>
<dbReference type="GlyGen" id="P08884">
    <property type="glycosylation" value="4 sites"/>
</dbReference>
<dbReference type="PaxDb" id="10090-ENSMUSP00000086978"/>
<dbReference type="PeptideAtlas" id="P08884"/>
<dbReference type="DNASU" id="14942"/>
<dbReference type="Ensembl" id="ENSMUST00000089549.8">
    <property type="protein sequence ID" value="ENSMUSP00000086978.7"/>
    <property type="gene ID" value="ENSMUSG00000022156.9"/>
</dbReference>
<dbReference type="GeneID" id="14942"/>
<dbReference type="KEGG" id="mmu:14942"/>
<dbReference type="UCSC" id="uc007ubo.1">
    <property type="organism name" value="mouse"/>
</dbReference>
<dbReference type="AGR" id="MGI:109265"/>
<dbReference type="CTD" id="14942"/>
<dbReference type="MGI" id="MGI:109265">
    <property type="gene designation" value="Gzme"/>
</dbReference>
<dbReference type="VEuPathDB" id="HostDB:ENSMUSG00000022156"/>
<dbReference type="eggNOG" id="KOG3627">
    <property type="taxonomic scope" value="Eukaryota"/>
</dbReference>
<dbReference type="GeneTree" id="ENSGT01030000234551"/>
<dbReference type="HOGENOM" id="CLU_006842_1_0_1"/>
<dbReference type="InParanoid" id="P08884"/>
<dbReference type="OMA" id="SNDIMFL"/>
<dbReference type="OrthoDB" id="5565075at2759"/>
<dbReference type="PhylomeDB" id="P08884"/>
<dbReference type="TreeFam" id="TF333630"/>
<dbReference type="BioGRID-ORCS" id="14942">
    <property type="hits" value="2 hits in 76 CRISPR screens"/>
</dbReference>
<dbReference type="PRO" id="PR:P08884"/>
<dbReference type="Proteomes" id="UP000000589">
    <property type="component" value="Chromosome 14"/>
</dbReference>
<dbReference type="RNAct" id="P08884">
    <property type="molecule type" value="protein"/>
</dbReference>
<dbReference type="Bgee" id="ENSMUSG00000022156">
    <property type="expression patterns" value="Expressed in gastrula and 25 other cell types or tissues"/>
</dbReference>
<dbReference type="GO" id="GO:0044194">
    <property type="term" value="C:cytolytic granule"/>
    <property type="evidence" value="ECO:0007669"/>
    <property type="project" value="UniProtKB-SubCell"/>
</dbReference>
<dbReference type="GO" id="GO:0004252">
    <property type="term" value="F:serine-type endopeptidase activity"/>
    <property type="evidence" value="ECO:0007669"/>
    <property type="project" value="InterPro"/>
</dbReference>
<dbReference type="GO" id="GO:0031640">
    <property type="term" value="P:killing of cells of another organism"/>
    <property type="evidence" value="ECO:0007669"/>
    <property type="project" value="UniProtKB-KW"/>
</dbReference>
<dbReference type="GO" id="GO:0006508">
    <property type="term" value="P:proteolysis"/>
    <property type="evidence" value="ECO:0007669"/>
    <property type="project" value="UniProtKB-KW"/>
</dbReference>
<dbReference type="CDD" id="cd00190">
    <property type="entry name" value="Tryp_SPc"/>
    <property type="match status" value="1"/>
</dbReference>
<dbReference type="FunFam" id="2.40.10.10:FF:000014">
    <property type="entry name" value="Complement factor D"/>
    <property type="match status" value="1"/>
</dbReference>
<dbReference type="Gene3D" id="2.40.10.10">
    <property type="entry name" value="Trypsin-like serine proteases"/>
    <property type="match status" value="2"/>
</dbReference>
<dbReference type="InterPro" id="IPR009003">
    <property type="entry name" value="Peptidase_S1_PA"/>
</dbReference>
<dbReference type="InterPro" id="IPR043504">
    <property type="entry name" value="Peptidase_S1_PA_chymotrypsin"/>
</dbReference>
<dbReference type="InterPro" id="IPR001314">
    <property type="entry name" value="Peptidase_S1A"/>
</dbReference>
<dbReference type="InterPro" id="IPR001254">
    <property type="entry name" value="Trypsin_dom"/>
</dbReference>
<dbReference type="InterPro" id="IPR018114">
    <property type="entry name" value="TRYPSIN_HIS"/>
</dbReference>
<dbReference type="InterPro" id="IPR033116">
    <property type="entry name" value="TRYPSIN_SER"/>
</dbReference>
<dbReference type="PANTHER" id="PTHR24271:SF93">
    <property type="entry name" value="GRANZYME D-RELATED"/>
    <property type="match status" value="1"/>
</dbReference>
<dbReference type="PANTHER" id="PTHR24271">
    <property type="entry name" value="KALLIKREIN-RELATED"/>
    <property type="match status" value="1"/>
</dbReference>
<dbReference type="Pfam" id="PF00089">
    <property type="entry name" value="Trypsin"/>
    <property type="match status" value="1"/>
</dbReference>
<dbReference type="PRINTS" id="PR00722">
    <property type="entry name" value="CHYMOTRYPSIN"/>
</dbReference>
<dbReference type="SMART" id="SM00020">
    <property type="entry name" value="Tryp_SPc"/>
    <property type="match status" value="1"/>
</dbReference>
<dbReference type="SUPFAM" id="SSF50494">
    <property type="entry name" value="Trypsin-like serine proteases"/>
    <property type="match status" value="1"/>
</dbReference>
<dbReference type="PROSITE" id="PS50240">
    <property type="entry name" value="TRYPSIN_DOM"/>
    <property type="match status" value="1"/>
</dbReference>
<dbReference type="PROSITE" id="PS00134">
    <property type="entry name" value="TRYPSIN_HIS"/>
    <property type="match status" value="1"/>
</dbReference>
<dbReference type="PROSITE" id="PS00135">
    <property type="entry name" value="TRYPSIN_SER"/>
    <property type="match status" value="1"/>
</dbReference>
<proteinExistence type="evidence at protein level"/>
<gene>
    <name type="primary">Gzme</name>
    <name type="synonym">Ccp3</name>
    <name type="synonym">Ctla-6</name>
    <name type="synonym">Ctla6</name>
</gene>